<feature type="chain" id="PRO_0000286812" description="Zinc finger protein 618">
    <location>
        <begin position="1"/>
        <end position="953"/>
    </location>
</feature>
<feature type="zinc finger region" description="C2H2-type 1" evidence="2">
    <location>
        <begin position="146"/>
        <end position="168"/>
    </location>
</feature>
<feature type="zinc finger region" description="C2H2-type 2" evidence="2">
    <location>
        <begin position="187"/>
        <end position="209"/>
    </location>
</feature>
<feature type="zinc finger region" description="C2H2-type 3" evidence="2">
    <location>
        <begin position="255"/>
        <end position="277"/>
    </location>
</feature>
<feature type="zinc finger region" description="C2H2-type 4" evidence="2">
    <location>
        <begin position="391"/>
        <end position="413"/>
    </location>
</feature>
<feature type="region of interest" description="Disordered" evidence="3">
    <location>
        <begin position="1"/>
        <end position="56"/>
    </location>
</feature>
<feature type="region of interest" description="Disordered" evidence="3">
    <location>
        <begin position="283"/>
        <end position="305"/>
    </location>
</feature>
<feature type="region of interest" description="Disordered" evidence="3">
    <location>
        <begin position="337"/>
        <end position="390"/>
    </location>
</feature>
<feature type="region of interest" description="Disordered" evidence="3">
    <location>
        <begin position="419"/>
        <end position="461"/>
    </location>
</feature>
<feature type="compositionally biased region" description="Polar residues" evidence="3">
    <location>
        <begin position="339"/>
        <end position="354"/>
    </location>
</feature>
<feature type="compositionally biased region" description="Basic and acidic residues" evidence="3">
    <location>
        <begin position="365"/>
        <end position="379"/>
    </location>
</feature>
<feature type="compositionally biased region" description="Polar residues" evidence="3">
    <location>
        <begin position="419"/>
        <end position="428"/>
    </location>
</feature>
<feature type="compositionally biased region" description="Polar residues" evidence="3">
    <location>
        <begin position="441"/>
        <end position="458"/>
    </location>
</feature>
<feature type="modified residue" description="N-acetylmethionine" evidence="1">
    <location>
        <position position="1"/>
    </location>
</feature>
<feature type="cross-link" description="Glycyl lysine isopeptide (Lys-Gly) (interchain with G-Cter in SUMO2)" evidence="1">
    <location>
        <position position="63"/>
    </location>
</feature>
<feature type="cross-link" description="Glycyl lysine isopeptide (Lys-Gly) (interchain with G-Cter in SUMO2)" evidence="1">
    <location>
        <position position="81"/>
    </location>
</feature>
<feature type="cross-link" description="Glycyl lysine isopeptide (Lys-Gly) (interchain with G-Cter in SUMO2)" evidence="1">
    <location>
        <position position="238"/>
    </location>
</feature>
<feature type="cross-link" description="Glycyl lysine isopeptide (Lys-Gly) (interchain with G-Cter in SUMO2)" evidence="1">
    <location>
        <position position="436"/>
    </location>
</feature>
<feature type="splice variant" id="VSP_025186" description="In isoform 2." evidence="4">
    <location>
        <begin position="1"/>
        <end position="56"/>
    </location>
</feature>
<feature type="splice variant" id="VSP_025184" description="In isoform 2." evidence="4">
    <original>ENTFSRRVESKAQNHFEETNSSSQNSSEPYTCGACGIQFQFYSNLLEHMQSHAADNENNITSNQSRSPPAAVEEKWKPQA</original>
    <variation>GTDGLSHRCLPGFPPTTCRSCSPARTRLEFPSCFGADWDPWPLATSVTLADQVINLSWRFIQRNLQTFSKFDVFFSQIMA</variation>
    <location>
        <begin position="362"/>
        <end position="441"/>
    </location>
</feature>
<feature type="splice variant" id="VSP_025185" description="In isoform 2." evidence="4">
    <location>
        <begin position="442"/>
        <end position="953"/>
    </location>
</feature>
<feature type="sequence conflict" description="In Ref. 1; BAB28510." evidence="5" ref="1">
    <original>K</original>
    <variation>N</variation>
    <location>
        <position position="251"/>
    </location>
</feature>
<proteinExistence type="evidence at transcript level"/>
<gene>
    <name type="primary">Znf618</name>
    <name type="synonym">Kiaa1952</name>
    <name type="synonym">Zfp618</name>
</gene>
<sequence length="953" mass="104866">MSQPDGAAAPQVDGASAPGRKSAVNRERLKRSQKSSKVEGPEPVPAEASLSAEQGTMTEVKVKTEVPDDYIQEVIWQGEAKEEKAGGKDSTGDVPAEICVVIGGVRNQQTLDGKAPEGSPHGGSVRSRYSGTWIFDQALKYASGSYECGICGKKYKYYNCFQTHVRAHRDTEATSGEGVSQSNNFRYTCDICGKKYKYYSCFQEHRDLHAVDVFSVEGAPENRADPFDQGVVATDEVKEEPPEPFQKIGPKTGNYTCEFCGKQYKYYTPYQEHVALHAPISTAPGWEPPEDPDTGSECSHPEVTPSPRFVAAKTQSNQSGKKAPASVVRCTSLLHRTPPATQTQTFRAPNSGSPASKAAAAENTFSRRVESKAQNHFEETNSSSQNSSEPYTCGACGIQFQFYSNLLEHMQSHAADNENNITSNQSRSPPAAVEEKWKPQAQRNSANNTTTSGLTPNSVIPEKERQNIAERLLRVMCADLGALSVVSGKEFLKLAQTLVDSGARYGAFSVTEILGNFNTLALKHLPRMYNQVKVKVTCALGSNACLGIGVTCHSQSVGPDSCYILTAYQAEGNHIKSYVLGVKGADIRDSGDLVHHWVQNVLSEFVMSEIRTVYVTDCRVSTSAFSKAGMCLRCSACALNSVVQSVLSKRTLQARSMHEVIELLNVCEDLAGSTGLAKETFGSLEETSPPPCWNSVTDSLLLVHERYEQICEFYSRAKKMNLIQSLNKHLLSNLAAILTPVKQAVIELSNESQPTLQLVLPTYVRLEKLFTAKANDAGTVSKLCHLFLEALKENFKVHPAHKVAMILDPQQKLRPVPPYQHEEIISKVCELINEVKESWAEEADFEPAAKKARSATGEHPAAQEEDRLGKNEVYDYLQEPLFQATPDLFQYWSCVTQKHTKLAKLAFWLLAVPAVGARSGCVNMCEQALLIKRRRLLSPEDMNKLMFLKSNML</sequence>
<comment type="function">
    <text evidence="1">Regulates UHRF2 function as a specific 5-hydroxymethylcytosine (5hmC) reader by regulating its chromatin localization.</text>
</comment>
<comment type="subunit">
    <text evidence="1">Interacts with UHRF2.</text>
</comment>
<comment type="subcellular location">
    <subcellularLocation>
        <location evidence="1">Nucleus</location>
    </subcellularLocation>
    <subcellularLocation>
        <location evidence="1">Chromosome</location>
    </subcellularLocation>
    <text evidence="1">Localizes at genomic loci that are enriched for 5-hydroxymethylcytosine (5hmC).</text>
</comment>
<comment type="alternative products">
    <event type="alternative splicing"/>
    <isoform>
        <id>Q80YY7-1</id>
        <name>1</name>
        <sequence type="displayed"/>
    </isoform>
    <isoform>
        <id>Q80YY7-2</id>
        <name>2</name>
        <sequence type="described" ref="VSP_025186 VSP_025184 VSP_025185"/>
    </isoform>
</comment>
<comment type="similarity">
    <text evidence="5">Belongs to the krueppel C2H2-type zinc-finger protein family.</text>
</comment>
<comment type="sequence caution" evidence="5">
    <conflict type="frameshift">
        <sequence resource="EMBL-CDS" id="BAB28510"/>
    </conflict>
</comment>
<dbReference type="EMBL" id="AK012848">
    <property type="protein sequence ID" value="BAB28510.1"/>
    <property type="status" value="ALT_FRAME"/>
    <property type="molecule type" value="mRNA"/>
</dbReference>
<dbReference type="EMBL" id="AL691431">
    <property type="status" value="NOT_ANNOTATED_CDS"/>
    <property type="molecule type" value="Genomic_DNA"/>
</dbReference>
<dbReference type="EMBL" id="AL691496">
    <property type="status" value="NOT_ANNOTATED_CDS"/>
    <property type="molecule type" value="Genomic_DNA"/>
</dbReference>
<dbReference type="EMBL" id="AK173309">
    <property type="protein sequence ID" value="BAD32587.1"/>
    <property type="molecule type" value="mRNA"/>
</dbReference>
<dbReference type="CCDS" id="CCDS89760.1">
    <molecule id="Q80YY7-1"/>
</dbReference>
<dbReference type="SMR" id="Q80YY7"/>
<dbReference type="FunCoup" id="Q80YY7">
    <property type="interactions" value="74"/>
</dbReference>
<dbReference type="IntAct" id="Q80YY7">
    <property type="interactions" value="1"/>
</dbReference>
<dbReference type="STRING" id="10090.ENSMUSP00000069275"/>
<dbReference type="iPTMnet" id="Q80YY7"/>
<dbReference type="PhosphoSitePlus" id="Q80YY7"/>
<dbReference type="PaxDb" id="10090-ENSMUSP00000103038"/>
<dbReference type="ProteomicsDB" id="275017">
    <molecule id="Q80YY7-1"/>
</dbReference>
<dbReference type="ProteomicsDB" id="275018">
    <molecule id="Q80YY7-2"/>
</dbReference>
<dbReference type="Antibodypedia" id="29860">
    <property type="antibodies" value="35 antibodies from 14 providers"/>
</dbReference>
<dbReference type="Ensembl" id="ENSMUST00000107415.8">
    <molecule id="Q80YY7-1"/>
    <property type="protein sequence ID" value="ENSMUSP00000103038.2"/>
    <property type="gene ID" value="ENSMUSG00000028358.16"/>
</dbReference>
<dbReference type="AGR" id="MGI:1919950"/>
<dbReference type="MGI" id="MGI:1919950">
    <property type="gene designation" value="Zfp618"/>
</dbReference>
<dbReference type="VEuPathDB" id="HostDB:ENSMUSG00000028358"/>
<dbReference type="eggNOG" id="KOG1121">
    <property type="taxonomic scope" value="Eukaryota"/>
</dbReference>
<dbReference type="GeneTree" id="ENSGT00940000153306"/>
<dbReference type="InParanoid" id="Q80YY7"/>
<dbReference type="OrthoDB" id="10051975at2759"/>
<dbReference type="PhylomeDB" id="Q80YY7"/>
<dbReference type="TreeFam" id="TF331270"/>
<dbReference type="ChiTaRS" id="Zfp618">
    <property type="organism name" value="mouse"/>
</dbReference>
<dbReference type="PRO" id="PR:Q80YY7"/>
<dbReference type="Proteomes" id="UP000000589">
    <property type="component" value="Chromosome 4"/>
</dbReference>
<dbReference type="RNAct" id="Q80YY7">
    <property type="molecule type" value="protein"/>
</dbReference>
<dbReference type="Bgee" id="ENSMUSG00000028358">
    <property type="expression patterns" value="Expressed in metanephric cortical collecting duct and 164 other cell types or tissues"/>
</dbReference>
<dbReference type="ExpressionAtlas" id="Q80YY7">
    <property type="expression patterns" value="baseline and differential"/>
</dbReference>
<dbReference type="GO" id="GO:0005634">
    <property type="term" value="C:nucleus"/>
    <property type="evidence" value="ECO:0007669"/>
    <property type="project" value="UniProtKB-SubCell"/>
</dbReference>
<dbReference type="GO" id="GO:0005721">
    <property type="term" value="C:pericentric heterochromatin"/>
    <property type="evidence" value="ECO:0007669"/>
    <property type="project" value="Ensembl"/>
</dbReference>
<dbReference type="GO" id="GO:0140463">
    <property type="term" value="F:chromatin-protein adaptor activity"/>
    <property type="evidence" value="ECO:0007669"/>
    <property type="project" value="Ensembl"/>
</dbReference>
<dbReference type="GO" id="GO:0003677">
    <property type="term" value="F:DNA binding"/>
    <property type="evidence" value="ECO:0007669"/>
    <property type="project" value="UniProtKB-KW"/>
</dbReference>
<dbReference type="GO" id="GO:0042802">
    <property type="term" value="F:identical protein binding"/>
    <property type="evidence" value="ECO:0007669"/>
    <property type="project" value="Ensembl"/>
</dbReference>
<dbReference type="GO" id="GO:0001221">
    <property type="term" value="F:transcription coregulator binding"/>
    <property type="evidence" value="ECO:0007669"/>
    <property type="project" value="Ensembl"/>
</dbReference>
<dbReference type="GO" id="GO:0008270">
    <property type="term" value="F:zinc ion binding"/>
    <property type="evidence" value="ECO:0007669"/>
    <property type="project" value="UniProtKB-KW"/>
</dbReference>
<dbReference type="FunFam" id="1.10.10.1070:FF:000001">
    <property type="entry name" value="zinc finger protein 618 isoform X2"/>
    <property type="match status" value="1"/>
</dbReference>
<dbReference type="Gene3D" id="3.30.160.60">
    <property type="entry name" value="Classic Zinc Finger"/>
    <property type="match status" value="2"/>
</dbReference>
<dbReference type="Gene3D" id="1.10.10.1070">
    <property type="entry name" value="Zinc finger, BED domain-containing"/>
    <property type="match status" value="1"/>
</dbReference>
<dbReference type="InterPro" id="IPR012337">
    <property type="entry name" value="RNaseH-like_sf"/>
</dbReference>
<dbReference type="InterPro" id="IPR036236">
    <property type="entry name" value="Znf_C2H2_sf"/>
</dbReference>
<dbReference type="InterPro" id="IPR013087">
    <property type="entry name" value="Znf_C2H2_type"/>
</dbReference>
<dbReference type="PANTHER" id="PTHR24383">
    <property type="entry name" value="ZINC FINGER PROTEIN"/>
    <property type="match status" value="1"/>
</dbReference>
<dbReference type="PANTHER" id="PTHR24383:SF12">
    <property type="entry name" value="ZINC FINGER PROTEIN 618"/>
    <property type="match status" value="1"/>
</dbReference>
<dbReference type="SMART" id="SM00355">
    <property type="entry name" value="ZnF_C2H2"/>
    <property type="match status" value="4"/>
</dbReference>
<dbReference type="SUPFAM" id="SSF57667">
    <property type="entry name" value="beta-beta-alpha zinc fingers"/>
    <property type="match status" value="2"/>
</dbReference>
<dbReference type="SUPFAM" id="SSF140996">
    <property type="entry name" value="Hermes dimerisation domain"/>
    <property type="match status" value="1"/>
</dbReference>
<dbReference type="SUPFAM" id="SSF53098">
    <property type="entry name" value="Ribonuclease H-like"/>
    <property type="match status" value="1"/>
</dbReference>
<dbReference type="PROSITE" id="PS00028">
    <property type="entry name" value="ZINC_FINGER_C2H2_1"/>
    <property type="match status" value="4"/>
</dbReference>
<dbReference type="PROSITE" id="PS50157">
    <property type="entry name" value="ZINC_FINGER_C2H2_2"/>
    <property type="match status" value="4"/>
</dbReference>
<accession>Q80YY7</accession>
<accession>Q69Z57</accession>
<accession>Q80YY8</accession>
<accession>Q9CZ99</accession>
<name>ZN618_MOUSE</name>
<organism>
    <name type="scientific">Mus musculus</name>
    <name type="common">Mouse</name>
    <dbReference type="NCBI Taxonomy" id="10090"/>
    <lineage>
        <taxon>Eukaryota</taxon>
        <taxon>Metazoa</taxon>
        <taxon>Chordata</taxon>
        <taxon>Craniata</taxon>
        <taxon>Vertebrata</taxon>
        <taxon>Euteleostomi</taxon>
        <taxon>Mammalia</taxon>
        <taxon>Eutheria</taxon>
        <taxon>Euarchontoglires</taxon>
        <taxon>Glires</taxon>
        <taxon>Rodentia</taxon>
        <taxon>Myomorpha</taxon>
        <taxon>Muroidea</taxon>
        <taxon>Muridae</taxon>
        <taxon>Murinae</taxon>
        <taxon>Mus</taxon>
        <taxon>Mus</taxon>
    </lineage>
</organism>
<reference key="1">
    <citation type="journal article" date="2005" name="Science">
        <title>The transcriptional landscape of the mammalian genome.</title>
        <authorList>
            <person name="Carninci P."/>
            <person name="Kasukawa T."/>
            <person name="Katayama S."/>
            <person name="Gough J."/>
            <person name="Frith M.C."/>
            <person name="Maeda N."/>
            <person name="Oyama R."/>
            <person name="Ravasi T."/>
            <person name="Lenhard B."/>
            <person name="Wells C."/>
            <person name="Kodzius R."/>
            <person name="Shimokawa K."/>
            <person name="Bajic V.B."/>
            <person name="Brenner S.E."/>
            <person name="Batalov S."/>
            <person name="Forrest A.R."/>
            <person name="Zavolan M."/>
            <person name="Davis M.J."/>
            <person name="Wilming L.G."/>
            <person name="Aidinis V."/>
            <person name="Allen J.E."/>
            <person name="Ambesi-Impiombato A."/>
            <person name="Apweiler R."/>
            <person name="Aturaliya R.N."/>
            <person name="Bailey T.L."/>
            <person name="Bansal M."/>
            <person name="Baxter L."/>
            <person name="Beisel K.W."/>
            <person name="Bersano T."/>
            <person name="Bono H."/>
            <person name="Chalk A.M."/>
            <person name="Chiu K.P."/>
            <person name="Choudhary V."/>
            <person name="Christoffels A."/>
            <person name="Clutterbuck D.R."/>
            <person name="Crowe M.L."/>
            <person name="Dalla E."/>
            <person name="Dalrymple B.P."/>
            <person name="de Bono B."/>
            <person name="Della Gatta G."/>
            <person name="di Bernardo D."/>
            <person name="Down T."/>
            <person name="Engstrom P."/>
            <person name="Fagiolini M."/>
            <person name="Faulkner G."/>
            <person name="Fletcher C.F."/>
            <person name="Fukushima T."/>
            <person name="Furuno M."/>
            <person name="Futaki S."/>
            <person name="Gariboldi M."/>
            <person name="Georgii-Hemming P."/>
            <person name="Gingeras T.R."/>
            <person name="Gojobori T."/>
            <person name="Green R.E."/>
            <person name="Gustincich S."/>
            <person name="Harbers M."/>
            <person name="Hayashi Y."/>
            <person name="Hensch T.K."/>
            <person name="Hirokawa N."/>
            <person name="Hill D."/>
            <person name="Huminiecki L."/>
            <person name="Iacono M."/>
            <person name="Ikeo K."/>
            <person name="Iwama A."/>
            <person name="Ishikawa T."/>
            <person name="Jakt M."/>
            <person name="Kanapin A."/>
            <person name="Katoh M."/>
            <person name="Kawasawa Y."/>
            <person name="Kelso J."/>
            <person name="Kitamura H."/>
            <person name="Kitano H."/>
            <person name="Kollias G."/>
            <person name="Krishnan S.P."/>
            <person name="Kruger A."/>
            <person name="Kummerfeld S.K."/>
            <person name="Kurochkin I.V."/>
            <person name="Lareau L.F."/>
            <person name="Lazarevic D."/>
            <person name="Lipovich L."/>
            <person name="Liu J."/>
            <person name="Liuni S."/>
            <person name="McWilliam S."/>
            <person name="Madan Babu M."/>
            <person name="Madera M."/>
            <person name="Marchionni L."/>
            <person name="Matsuda H."/>
            <person name="Matsuzawa S."/>
            <person name="Miki H."/>
            <person name="Mignone F."/>
            <person name="Miyake S."/>
            <person name="Morris K."/>
            <person name="Mottagui-Tabar S."/>
            <person name="Mulder N."/>
            <person name="Nakano N."/>
            <person name="Nakauchi H."/>
            <person name="Ng P."/>
            <person name="Nilsson R."/>
            <person name="Nishiguchi S."/>
            <person name="Nishikawa S."/>
            <person name="Nori F."/>
            <person name="Ohara O."/>
            <person name="Okazaki Y."/>
            <person name="Orlando V."/>
            <person name="Pang K.C."/>
            <person name="Pavan W.J."/>
            <person name="Pavesi G."/>
            <person name="Pesole G."/>
            <person name="Petrovsky N."/>
            <person name="Piazza S."/>
            <person name="Reed J."/>
            <person name="Reid J.F."/>
            <person name="Ring B.Z."/>
            <person name="Ringwald M."/>
            <person name="Rost B."/>
            <person name="Ruan Y."/>
            <person name="Salzberg S.L."/>
            <person name="Sandelin A."/>
            <person name="Schneider C."/>
            <person name="Schoenbach C."/>
            <person name="Sekiguchi K."/>
            <person name="Semple C.A."/>
            <person name="Seno S."/>
            <person name="Sessa L."/>
            <person name="Sheng Y."/>
            <person name="Shibata Y."/>
            <person name="Shimada H."/>
            <person name="Shimada K."/>
            <person name="Silva D."/>
            <person name="Sinclair B."/>
            <person name="Sperling S."/>
            <person name="Stupka E."/>
            <person name="Sugiura K."/>
            <person name="Sultana R."/>
            <person name="Takenaka Y."/>
            <person name="Taki K."/>
            <person name="Tammoja K."/>
            <person name="Tan S.L."/>
            <person name="Tang S."/>
            <person name="Taylor M.S."/>
            <person name="Tegner J."/>
            <person name="Teichmann S.A."/>
            <person name="Ueda H.R."/>
            <person name="van Nimwegen E."/>
            <person name="Verardo R."/>
            <person name="Wei C.L."/>
            <person name="Yagi K."/>
            <person name="Yamanishi H."/>
            <person name="Zabarovsky E."/>
            <person name="Zhu S."/>
            <person name="Zimmer A."/>
            <person name="Hide W."/>
            <person name="Bult C."/>
            <person name="Grimmond S.M."/>
            <person name="Teasdale R.D."/>
            <person name="Liu E.T."/>
            <person name="Brusic V."/>
            <person name="Quackenbush J."/>
            <person name="Wahlestedt C."/>
            <person name="Mattick J.S."/>
            <person name="Hume D.A."/>
            <person name="Kai C."/>
            <person name="Sasaki D."/>
            <person name="Tomaru Y."/>
            <person name="Fukuda S."/>
            <person name="Kanamori-Katayama M."/>
            <person name="Suzuki M."/>
            <person name="Aoki J."/>
            <person name="Arakawa T."/>
            <person name="Iida J."/>
            <person name="Imamura K."/>
            <person name="Itoh M."/>
            <person name="Kato T."/>
            <person name="Kawaji H."/>
            <person name="Kawagashira N."/>
            <person name="Kawashima T."/>
            <person name="Kojima M."/>
            <person name="Kondo S."/>
            <person name="Konno H."/>
            <person name="Nakano K."/>
            <person name="Ninomiya N."/>
            <person name="Nishio T."/>
            <person name="Okada M."/>
            <person name="Plessy C."/>
            <person name="Shibata K."/>
            <person name="Shiraki T."/>
            <person name="Suzuki S."/>
            <person name="Tagami M."/>
            <person name="Waki K."/>
            <person name="Watahiki A."/>
            <person name="Okamura-Oho Y."/>
            <person name="Suzuki H."/>
            <person name="Kawai J."/>
            <person name="Hayashizaki Y."/>
        </authorList>
    </citation>
    <scope>NUCLEOTIDE SEQUENCE [LARGE SCALE MRNA] (ISOFORM 2)</scope>
    <source>
        <strain>C57BL/6J</strain>
        <tissue>Embryo</tissue>
    </source>
</reference>
<reference key="2">
    <citation type="journal article" date="2009" name="PLoS Biol.">
        <title>Lineage-specific biology revealed by a finished genome assembly of the mouse.</title>
        <authorList>
            <person name="Church D.M."/>
            <person name="Goodstadt L."/>
            <person name="Hillier L.W."/>
            <person name="Zody M.C."/>
            <person name="Goldstein S."/>
            <person name="She X."/>
            <person name="Bult C.J."/>
            <person name="Agarwala R."/>
            <person name="Cherry J.L."/>
            <person name="DiCuccio M."/>
            <person name="Hlavina W."/>
            <person name="Kapustin Y."/>
            <person name="Meric P."/>
            <person name="Maglott D."/>
            <person name="Birtle Z."/>
            <person name="Marques A.C."/>
            <person name="Graves T."/>
            <person name="Zhou S."/>
            <person name="Teague B."/>
            <person name="Potamousis K."/>
            <person name="Churas C."/>
            <person name="Place M."/>
            <person name="Herschleb J."/>
            <person name="Runnheim R."/>
            <person name="Forrest D."/>
            <person name="Amos-Landgraf J."/>
            <person name="Schwartz D.C."/>
            <person name="Cheng Z."/>
            <person name="Lindblad-Toh K."/>
            <person name="Eichler E.E."/>
            <person name="Ponting C.P."/>
        </authorList>
    </citation>
    <scope>NUCLEOTIDE SEQUENCE [LARGE SCALE GENOMIC DNA]</scope>
    <source>
        <strain>C57BL/6J</strain>
    </source>
</reference>
<reference key="3">
    <citation type="journal article" date="2004" name="DNA Res.">
        <title>Prediction of the coding sequences of mouse homologues of KIAA gene: IV. The complete nucleotide sequences of 500 mouse KIAA-homologous cDNAs identified by screening of terminal sequences of cDNA clones randomly sampled from size-fractionated libraries.</title>
        <authorList>
            <person name="Okazaki N."/>
            <person name="Kikuno R."/>
            <person name="Ohara R."/>
            <person name="Inamoto S."/>
            <person name="Koseki H."/>
            <person name="Hiraoka S."/>
            <person name="Saga Y."/>
            <person name="Seino S."/>
            <person name="Nishimura M."/>
            <person name="Kaisho T."/>
            <person name="Hoshino K."/>
            <person name="Kitamura H."/>
            <person name="Nagase T."/>
            <person name="Ohara O."/>
            <person name="Koga H."/>
        </authorList>
    </citation>
    <scope>NUCLEOTIDE SEQUENCE [LARGE SCALE MRNA] OF 645-953 (ISOFORM 1)</scope>
    <source>
        <tissue>Embryonic intestine</tissue>
    </source>
</reference>
<evidence type="ECO:0000250" key="1">
    <source>
        <dbReference type="UniProtKB" id="Q5T7W0"/>
    </source>
</evidence>
<evidence type="ECO:0000255" key="2">
    <source>
        <dbReference type="PROSITE-ProRule" id="PRU00042"/>
    </source>
</evidence>
<evidence type="ECO:0000256" key="3">
    <source>
        <dbReference type="SAM" id="MobiDB-lite"/>
    </source>
</evidence>
<evidence type="ECO:0000303" key="4">
    <source>
    </source>
</evidence>
<evidence type="ECO:0000305" key="5"/>
<keyword id="KW-0007">Acetylation</keyword>
<keyword id="KW-0025">Alternative splicing</keyword>
<keyword id="KW-0158">Chromosome</keyword>
<keyword id="KW-0238">DNA-binding</keyword>
<keyword id="KW-1017">Isopeptide bond</keyword>
<keyword id="KW-0479">Metal-binding</keyword>
<keyword id="KW-0539">Nucleus</keyword>
<keyword id="KW-1185">Reference proteome</keyword>
<keyword id="KW-0677">Repeat</keyword>
<keyword id="KW-0804">Transcription</keyword>
<keyword id="KW-0805">Transcription regulation</keyword>
<keyword id="KW-0832">Ubl conjugation</keyword>
<keyword id="KW-0862">Zinc</keyword>
<keyword id="KW-0863">Zinc-finger</keyword>
<protein>
    <recommendedName>
        <fullName>Zinc finger protein 618</fullName>
    </recommendedName>
</protein>